<protein>
    <recommendedName>
        <fullName evidence="8">Aquaporin-3</fullName>
        <shortName>AQP-3</shortName>
    </recommendedName>
    <alternativeName>
        <fullName>31.4 kDa water channel protein</fullName>
    </alternativeName>
    <alternativeName>
        <fullName>Aquaglyceroporin-3</fullName>
    </alternativeName>
</protein>
<accession>P47862</accession>
<accession>A0JPL5</accession>
<organism>
    <name type="scientific">Rattus norvegicus</name>
    <name type="common">Rat</name>
    <dbReference type="NCBI Taxonomy" id="10116"/>
    <lineage>
        <taxon>Eukaryota</taxon>
        <taxon>Metazoa</taxon>
        <taxon>Chordata</taxon>
        <taxon>Craniata</taxon>
        <taxon>Vertebrata</taxon>
        <taxon>Euteleostomi</taxon>
        <taxon>Mammalia</taxon>
        <taxon>Eutheria</taxon>
        <taxon>Euarchontoglires</taxon>
        <taxon>Glires</taxon>
        <taxon>Rodentia</taxon>
        <taxon>Myomorpha</taxon>
        <taxon>Muroidea</taxon>
        <taxon>Muridae</taxon>
        <taxon>Murinae</taxon>
        <taxon>Rattus</taxon>
    </lineage>
</organism>
<evidence type="ECO:0000250" key="1">
    <source>
        <dbReference type="UniProtKB" id="O14520"/>
    </source>
</evidence>
<evidence type="ECO:0000250" key="2">
    <source>
        <dbReference type="UniProtKB" id="Q8R2N1"/>
    </source>
</evidence>
<evidence type="ECO:0000250" key="3">
    <source>
        <dbReference type="UniProtKB" id="Q92482"/>
    </source>
</evidence>
<evidence type="ECO:0000255" key="4"/>
<evidence type="ECO:0000269" key="5">
    <source>
    </source>
</evidence>
<evidence type="ECO:0000269" key="6">
    <source>
    </source>
</evidence>
<evidence type="ECO:0000305" key="7"/>
<evidence type="ECO:0000305" key="8">
    <source>
    </source>
</evidence>
<evidence type="ECO:0000312" key="9">
    <source>
        <dbReference type="RGD" id="68428"/>
    </source>
</evidence>
<name>AQP3_RAT</name>
<keyword id="KW-1003">Cell membrane</keyword>
<keyword id="KW-0325">Glycoprotein</keyword>
<keyword id="KW-0472">Membrane</keyword>
<keyword id="KW-1185">Reference proteome</keyword>
<keyword id="KW-0677">Repeat</keyword>
<keyword id="KW-0812">Transmembrane</keyword>
<keyword id="KW-1133">Transmembrane helix</keyword>
<keyword id="KW-0813">Transport</keyword>
<proteinExistence type="evidence at transcript level"/>
<feature type="chain" id="PRO_0000063945" description="Aquaporin-3">
    <location>
        <begin position="1"/>
        <end position="292"/>
    </location>
</feature>
<feature type="topological domain" description="Cytoplasmic" evidence="1">
    <location>
        <begin position="1"/>
        <end position="24"/>
    </location>
</feature>
<feature type="transmembrane region" description="Helical; Name=1" evidence="1">
    <location>
        <begin position="25"/>
        <end position="42"/>
    </location>
</feature>
<feature type="topological domain" description="Extracellular" evidence="1">
    <location>
        <begin position="43"/>
        <end position="56"/>
    </location>
</feature>
<feature type="transmembrane region" description="Helical; Name=2" evidence="1">
    <location>
        <begin position="57"/>
        <end position="74"/>
    </location>
</feature>
<feature type="topological domain" description="Cytoplasmic" evidence="1">
    <location>
        <begin position="75"/>
        <end position="78"/>
    </location>
</feature>
<feature type="intramembrane region" description="Discontinuously helical" evidence="1">
    <location>
        <begin position="79"/>
        <end position="92"/>
    </location>
</feature>
<feature type="topological domain" description="Cytoplasmic" evidence="1">
    <location>
        <begin position="93"/>
        <end position="100"/>
    </location>
</feature>
<feature type="transmembrane region" description="Helical; Name=3" evidence="1">
    <location>
        <begin position="101"/>
        <end position="121"/>
    </location>
</feature>
<feature type="topological domain" description="Extracellular" evidence="1">
    <location>
        <begin position="122"/>
        <end position="159"/>
    </location>
</feature>
<feature type="transmembrane region" description="Helical; Name=4" evidence="1">
    <location>
        <begin position="160"/>
        <end position="177"/>
    </location>
</feature>
<feature type="topological domain" description="Cytoplasmic" evidence="1">
    <location>
        <begin position="178"/>
        <end position="189"/>
    </location>
</feature>
<feature type="transmembrane region" description="Helical; Name=5" evidence="1">
    <location>
        <begin position="190"/>
        <end position="206"/>
    </location>
</feature>
<feature type="topological domain" description="Extracellular" evidence="1">
    <location>
        <begin position="207"/>
        <end position="210"/>
    </location>
</feature>
<feature type="intramembrane region" description="Discontinuously helical" evidence="1">
    <location>
        <begin position="211"/>
        <end position="224"/>
    </location>
</feature>
<feature type="topological domain" description="Extracellular" evidence="1">
    <location>
        <begin position="225"/>
        <end position="242"/>
    </location>
</feature>
<feature type="transmembrane region" description="Helical; Name=6" evidence="1">
    <location>
        <begin position="243"/>
        <end position="264"/>
    </location>
</feature>
<feature type="topological domain" description="Cytoplasmic" evidence="1">
    <location>
        <begin position="265"/>
        <end position="292"/>
    </location>
</feature>
<feature type="short sequence motif" description="NPA 1" evidence="1">
    <location>
        <begin position="83"/>
        <end position="85"/>
    </location>
</feature>
<feature type="short sequence motif" description="NPA 2" evidence="1">
    <location>
        <begin position="215"/>
        <end position="217"/>
    </location>
</feature>
<feature type="site" description="Selectivity filter" evidence="1">
    <location>
        <position position="63"/>
    </location>
</feature>
<feature type="site" description="Selectivity filter" evidence="1">
    <location>
        <position position="212"/>
    </location>
</feature>
<feature type="site" description="Selectivity filter" evidence="1">
    <location>
        <position position="218"/>
    </location>
</feature>
<feature type="glycosylation site" description="N-linked (GlcNAc...) asparagine" evidence="4">
    <location>
        <position position="141"/>
    </location>
</feature>
<feature type="sequence conflict" description="In Ref. 2; AAI27491." evidence="7" ref="2">
    <original>P</original>
    <variation>L</variation>
    <location>
        <position position="273"/>
    </location>
</feature>
<sequence>MGRQKELMNRCGEMLHIRYRLLRQALAECLGTLILVMFGCGSVAQVVLSRGTHGGFLTINLAFGFAVTLAILVAGQVSGAHLNPAVTFAMCFLAREPWIKLPIYTLAQTLGAFLGAGIVFGLYYDAIWAFAGNELVVSGPNGTAGIFATYPSGHLDMVNGFFDQFIGTAALIVCVLAIVDPYNNPVPRGLEAFTVGLVVLVIGTSMGFNSGYAVNPARDFGPRLFTALAGWGSEVFTTGQNWWWVPIVSPLLGSIGGVFVYQLMIGCHLEQPPPSTEAENVKLAHMKHKEQI</sequence>
<gene>
    <name evidence="9" type="primary">Aqp3</name>
</gene>
<comment type="function">
    <text evidence="2 3 5 6">Aquaglyceroporins form homotetrameric transmembrane channels, with each monomer independently mediating glycerol and water transport across the plasma membrane along their osmotic gradient (PubMed:7517548, PubMed:7526388). Could also be permeable to urea (PubMed:7517548, PubMed:7526388). Also participates in cell permeability to H2O2 and H2O2-mediated signaling (By similarity). In skin, transports glycerol to the epidermis and stratum corneum, where it maintains hydration, elasticity, and supports lipid biosynthesis for barrier repair. In kidney, contributes to the reabsorption of water, helping the body maintain proper fluid balance (By similarity).</text>
</comment>
<comment type="catalytic activity">
    <reaction evidence="5">
        <text>glycerol(in) = glycerol(out)</text>
        <dbReference type="Rhea" id="RHEA:29675"/>
        <dbReference type="ChEBI" id="CHEBI:17754"/>
    </reaction>
</comment>
<comment type="catalytic activity">
    <reaction evidence="5 6">
        <text>H2O(in) = H2O(out)</text>
        <dbReference type="Rhea" id="RHEA:29667"/>
        <dbReference type="ChEBI" id="CHEBI:15377"/>
    </reaction>
</comment>
<comment type="catalytic activity">
    <reaction evidence="5 6">
        <text>urea(in) = urea(out)</text>
        <dbReference type="Rhea" id="RHEA:32799"/>
        <dbReference type="ChEBI" id="CHEBI:16199"/>
    </reaction>
</comment>
<comment type="catalytic activity">
    <reaction evidence="3">
        <text>H2O2(out) = H2O2(in)</text>
        <dbReference type="Rhea" id="RHEA:74375"/>
        <dbReference type="ChEBI" id="CHEBI:16240"/>
    </reaction>
</comment>
<comment type="activity regulation">
    <text evidence="5">Channel activity is inhibited by mercury ions.</text>
</comment>
<comment type="subunit">
    <text evidence="1 3">Homotetramer; each monomer provides an independent glycerol/water pore (By similarity). Could also exist in other oligomeric states (By similarity).</text>
</comment>
<comment type="subcellular location">
    <subcellularLocation>
        <location evidence="5 6">Cell membrane</location>
        <topology evidence="1">Multi-pass membrane protein</topology>
    </subcellularLocation>
    <subcellularLocation>
        <location evidence="5">Basolateral cell membrane</location>
        <topology evidence="1">Multi-pass membrane protein</topology>
    </subcellularLocation>
</comment>
<comment type="tissue specificity">
    <text evidence="5 6">Detected in kidney medulla and papilla, in collecting duct cells (PubMed:7517548, PubMed:7526388). Detected in colon (PubMed:7517548).</text>
</comment>
<comment type="domain">
    <text evidence="1">Aquaporins contain two tandem repeats each containing three membrane-spanning domains and a pore-forming loop with the signature motif Asn-Pro-Ala (NPA).</text>
</comment>
<comment type="similarity">
    <text evidence="7">Belongs to the MIP/aquaporin (TC 1.A.8) family.</text>
</comment>
<comment type="sequence caution" evidence="7">
    <conflict type="erroneous initiation">
        <sequence resource="EMBL-CDS" id="BAA04559"/>
    </conflict>
    <text>Truncated N-terminus.</text>
</comment>
<dbReference type="EMBL" id="L35108">
    <property type="protein sequence ID" value="AAA53652.1"/>
    <property type="molecule type" value="mRNA"/>
</dbReference>
<dbReference type="EMBL" id="BC127490">
    <property type="protein sequence ID" value="AAI27491.1"/>
    <property type="molecule type" value="mRNA"/>
</dbReference>
<dbReference type="EMBL" id="D17695">
    <property type="protein sequence ID" value="BAA04559.1"/>
    <property type="status" value="ALT_INIT"/>
    <property type="molecule type" value="mRNA"/>
</dbReference>
<dbReference type="PIR" id="I59266">
    <property type="entry name" value="I59266"/>
</dbReference>
<dbReference type="RefSeq" id="NP_113891.1">
    <property type="nucleotide sequence ID" value="NM_031703.1"/>
</dbReference>
<dbReference type="SMR" id="P47862"/>
<dbReference type="FunCoup" id="P47862">
    <property type="interactions" value="97"/>
</dbReference>
<dbReference type="STRING" id="10116.ENSRNOP00000013803"/>
<dbReference type="TCDB" id="1.A.8.9.1">
    <property type="family name" value="the major intrinsic protein (mip) family"/>
</dbReference>
<dbReference type="GlyCosmos" id="P47862">
    <property type="glycosylation" value="1 site, No reported glycans"/>
</dbReference>
<dbReference type="GlyGen" id="P47862">
    <property type="glycosylation" value="1 site"/>
</dbReference>
<dbReference type="PhosphoSitePlus" id="P47862"/>
<dbReference type="PaxDb" id="10116-ENSRNOP00000013803"/>
<dbReference type="GeneID" id="65133"/>
<dbReference type="KEGG" id="rno:65133"/>
<dbReference type="UCSC" id="RGD:68428">
    <property type="organism name" value="rat"/>
</dbReference>
<dbReference type="AGR" id="RGD:68428"/>
<dbReference type="CTD" id="360"/>
<dbReference type="RGD" id="68428">
    <property type="gene designation" value="Aqp3"/>
</dbReference>
<dbReference type="eggNOG" id="KOG0224">
    <property type="taxonomic scope" value="Eukaryota"/>
</dbReference>
<dbReference type="InParanoid" id="P47862"/>
<dbReference type="OrthoDB" id="3222at2759"/>
<dbReference type="PhylomeDB" id="P47862"/>
<dbReference type="TreeFam" id="TF313173"/>
<dbReference type="Reactome" id="R-RNO-432040">
    <property type="pathway name" value="Vasopressin regulates renal water homeostasis via Aquaporins"/>
</dbReference>
<dbReference type="Reactome" id="R-RNO-432047">
    <property type="pathway name" value="Passive transport by Aquaporins"/>
</dbReference>
<dbReference type="PRO" id="PR:P47862"/>
<dbReference type="Proteomes" id="UP000002494">
    <property type="component" value="Unplaced"/>
</dbReference>
<dbReference type="GO" id="GO:0016323">
    <property type="term" value="C:basolateral plasma membrane"/>
    <property type="evidence" value="ECO:0000314"/>
    <property type="project" value="UniProtKB"/>
</dbReference>
<dbReference type="GO" id="GO:0005911">
    <property type="term" value="C:cell-cell junction"/>
    <property type="evidence" value="ECO:0000266"/>
    <property type="project" value="RGD"/>
</dbReference>
<dbReference type="GO" id="GO:0005737">
    <property type="term" value="C:cytoplasm"/>
    <property type="evidence" value="ECO:0000266"/>
    <property type="project" value="RGD"/>
</dbReference>
<dbReference type="GO" id="GO:0005886">
    <property type="term" value="C:plasma membrane"/>
    <property type="evidence" value="ECO:0000266"/>
    <property type="project" value="RGD"/>
</dbReference>
<dbReference type="GO" id="GO:0015254">
    <property type="term" value="F:glycerol channel activity"/>
    <property type="evidence" value="ECO:0000314"/>
    <property type="project" value="UniProtKB"/>
</dbReference>
<dbReference type="GO" id="GO:0042802">
    <property type="term" value="F:identical protein binding"/>
    <property type="evidence" value="ECO:0000266"/>
    <property type="project" value="RGD"/>
</dbReference>
<dbReference type="GO" id="GO:0015166">
    <property type="term" value="F:polyol transmembrane transporter activity"/>
    <property type="evidence" value="ECO:0000314"/>
    <property type="project" value="UniProtKB"/>
</dbReference>
<dbReference type="GO" id="GO:0015250">
    <property type="term" value="F:water channel activity"/>
    <property type="evidence" value="ECO:0000314"/>
    <property type="project" value="UniProtKB"/>
</dbReference>
<dbReference type="GO" id="GO:0071456">
    <property type="term" value="P:cellular response to hypoxia"/>
    <property type="evidence" value="ECO:0000266"/>
    <property type="project" value="RGD"/>
</dbReference>
<dbReference type="GO" id="GO:0051649">
    <property type="term" value="P:establishment of localization in cell"/>
    <property type="evidence" value="ECO:0000266"/>
    <property type="project" value="RGD"/>
</dbReference>
<dbReference type="GO" id="GO:0015793">
    <property type="term" value="P:glycerol transmembrane transport"/>
    <property type="evidence" value="ECO:0000314"/>
    <property type="project" value="UniProtKB"/>
</dbReference>
<dbReference type="GO" id="GO:0042476">
    <property type="term" value="P:odontogenesis"/>
    <property type="evidence" value="ECO:0000266"/>
    <property type="project" value="RGD"/>
</dbReference>
<dbReference type="GO" id="GO:0015791">
    <property type="term" value="P:polyol transmembrane transport"/>
    <property type="evidence" value="ECO:0000314"/>
    <property type="project" value="UniProtKB"/>
</dbReference>
<dbReference type="GO" id="GO:0002684">
    <property type="term" value="P:positive regulation of immune system process"/>
    <property type="evidence" value="ECO:0000266"/>
    <property type="project" value="RGD"/>
</dbReference>
<dbReference type="GO" id="GO:0070295">
    <property type="term" value="P:renal water absorption"/>
    <property type="evidence" value="ECO:0000266"/>
    <property type="project" value="RGD"/>
</dbReference>
<dbReference type="GO" id="GO:0002931">
    <property type="term" value="P:response to ischemia"/>
    <property type="evidence" value="ECO:0000266"/>
    <property type="project" value="RGD"/>
</dbReference>
<dbReference type="GO" id="GO:0032526">
    <property type="term" value="P:response to retinoic acid"/>
    <property type="evidence" value="ECO:0000266"/>
    <property type="project" value="RGD"/>
</dbReference>
<dbReference type="GO" id="GO:0015840">
    <property type="term" value="P:urea transport"/>
    <property type="evidence" value="ECO:0000266"/>
    <property type="project" value="RGD"/>
</dbReference>
<dbReference type="GO" id="GO:0006833">
    <property type="term" value="P:water transport"/>
    <property type="evidence" value="ECO:0000314"/>
    <property type="project" value="UniProtKB"/>
</dbReference>
<dbReference type="CDD" id="cd00333">
    <property type="entry name" value="MIP"/>
    <property type="match status" value="1"/>
</dbReference>
<dbReference type="FunFam" id="1.20.1080.10:FF:000005">
    <property type="entry name" value="Aquaporin 3"/>
    <property type="match status" value="1"/>
</dbReference>
<dbReference type="Gene3D" id="1.20.1080.10">
    <property type="entry name" value="Glycerol uptake facilitator protein"/>
    <property type="match status" value="1"/>
</dbReference>
<dbReference type="InterPro" id="IPR023271">
    <property type="entry name" value="Aquaporin-like"/>
</dbReference>
<dbReference type="InterPro" id="IPR023275">
    <property type="entry name" value="Aquaporin_3"/>
</dbReference>
<dbReference type="InterPro" id="IPR000425">
    <property type="entry name" value="MIP"/>
</dbReference>
<dbReference type="InterPro" id="IPR050363">
    <property type="entry name" value="MIP/Aquaporin"/>
</dbReference>
<dbReference type="InterPro" id="IPR022357">
    <property type="entry name" value="MIP_CS"/>
</dbReference>
<dbReference type="NCBIfam" id="TIGR00861">
    <property type="entry name" value="MIP"/>
    <property type="match status" value="1"/>
</dbReference>
<dbReference type="PANTHER" id="PTHR43829">
    <property type="entry name" value="AQUAPORIN OR AQUAGLYCEROPORIN RELATED"/>
    <property type="match status" value="1"/>
</dbReference>
<dbReference type="PANTHER" id="PTHR43829:SF7">
    <property type="entry name" value="AQUAPORIN-3"/>
    <property type="match status" value="1"/>
</dbReference>
<dbReference type="Pfam" id="PF00230">
    <property type="entry name" value="MIP"/>
    <property type="match status" value="1"/>
</dbReference>
<dbReference type="PRINTS" id="PR02015">
    <property type="entry name" value="AQUAPORIN3"/>
</dbReference>
<dbReference type="PRINTS" id="PR00783">
    <property type="entry name" value="MINTRINSICP"/>
</dbReference>
<dbReference type="SUPFAM" id="SSF81338">
    <property type="entry name" value="Aquaporin-like"/>
    <property type="match status" value="1"/>
</dbReference>
<dbReference type="PROSITE" id="PS00221">
    <property type="entry name" value="MIP"/>
    <property type="match status" value="1"/>
</dbReference>
<reference key="1">
    <citation type="journal article" date="1994" name="Proc. Natl. Acad. Sci. U.S.A.">
        <title>Cloning and expression of AQP3, a water channel from the medullary collecting duct of rat kidney.</title>
        <authorList>
            <person name="Echevarria M."/>
            <person name="Windhager E.E."/>
            <person name="Tate S.S."/>
            <person name="Frindt G."/>
        </authorList>
    </citation>
    <scope>NUCLEOTIDE SEQUENCE [MRNA]</scope>
    <scope>FUNCTION</scope>
    <scope>TRANSPORTER ACTIVITY</scope>
    <scope>SUBCELLULAR LOCATION</scope>
    <scope>TISSUE SPECIFICITY</scope>
    <source>
        <strain>Sprague-Dawley</strain>
        <tissue>Kidney</tissue>
    </source>
</reference>
<reference key="2">
    <citation type="journal article" date="2004" name="Genome Res.">
        <title>The status, quality, and expansion of the NIH full-length cDNA project: the Mammalian Gene Collection (MGC).</title>
        <authorList>
            <consortium name="The MGC Project Team"/>
        </authorList>
    </citation>
    <scope>NUCLEOTIDE SEQUENCE [LARGE SCALE MRNA]</scope>
    <source>
        <tissue>Brain</tissue>
    </source>
</reference>
<reference key="3">
    <citation type="journal article" date="1994" name="Proc. Natl. Acad. Sci. U.S.A.">
        <title>Molecular cloning and expression of a member of the aquaporin family with permeability to glycerol and urea in addition to water expressed at the basolateral membrane of kidney collecting duct cells.</title>
        <authorList>
            <person name="Ishibashi K."/>
            <person name="Sasaki S."/>
            <person name="Fushimi K."/>
            <person name="Uchida S."/>
            <person name="Kuwahara M."/>
            <person name="Saito H."/>
            <person name="Furukawa T."/>
            <person name="Nakajima K."/>
            <person name="Yamaguchi Y."/>
            <person name="Gojobori T."/>
            <person name="Marumo F."/>
        </authorList>
    </citation>
    <scope>NUCLEOTIDE SEQUENCE [MRNA] OF 4-292</scope>
    <scope>FUNCTION</scope>
    <scope>TRANSPORTER ACTIVITY</scope>
    <scope>SUBCELLULAR LOCATION</scope>
    <scope>ACTIVITY REGULATION</scope>
    <scope>TISSUE SPECIFICITY</scope>
    <source>
        <tissue>Kidney</tissue>
    </source>
</reference>